<keyword id="KW-0131">Cell cycle</keyword>
<keyword id="KW-0132">Cell division</keyword>
<keyword id="KW-0175">Coiled coil</keyword>
<keyword id="KW-0963">Cytoplasm</keyword>
<keyword id="KW-0238">DNA-binding</keyword>
<keyword id="KW-1185">Reference proteome</keyword>
<reference key="1">
    <citation type="submission" date="2007-10" db="EMBL/GenBank/DDBJ databases">
        <title>Complete sequence of Shewanella pealeana ATCC 700345.</title>
        <authorList>
            <consortium name="US DOE Joint Genome Institute"/>
            <person name="Copeland A."/>
            <person name="Lucas S."/>
            <person name="Lapidus A."/>
            <person name="Barry K."/>
            <person name="Glavina del Rio T."/>
            <person name="Dalin E."/>
            <person name="Tice H."/>
            <person name="Pitluck S."/>
            <person name="Chertkov O."/>
            <person name="Brettin T."/>
            <person name="Bruce D."/>
            <person name="Detter J.C."/>
            <person name="Han C."/>
            <person name="Schmutz J."/>
            <person name="Larimer F."/>
            <person name="Land M."/>
            <person name="Hauser L."/>
            <person name="Kyrpides N."/>
            <person name="Kim E."/>
            <person name="Zhao J.-S.Z."/>
            <person name="Manno D."/>
            <person name="Hawari J."/>
            <person name="Richardson P."/>
        </authorList>
    </citation>
    <scope>NUCLEOTIDE SEQUENCE [LARGE SCALE GENOMIC DNA]</scope>
    <source>
        <strain>ATCC 700345 / ANG-SQ1</strain>
    </source>
</reference>
<feature type="chain" id="PRO_1000088463" description="Nucleoid occlusion factor SlmA">
    <location>
        <begin position="1"/>
        <end position="197"/>
    </location>
</feature>
<feature type="domain" description="HTH tetR-type" evidence="1">
    <location>
        <begin position="7"/>
        <end position="67"/>
    </location>
</feature>
<feature type="DNA-binding region" description="H-T-H motif" evidence="1">
    <location>
        <begin position="30"/>
        <end position="49"/>
    </location>
</feature>
<feature type="coiled-coil region" evidence="1">
    <location>
        <begin position="109"/>
        <end position="136"/>
    </location>
</feature>
<gene>
    <name evidence="1" type="primary">slmA</name>
    <name type="ordered locus">Spea_3840</name>
</gene>
<organism>
    <name type="scientific">Shewanella pealeana (strain ATCC 700345 / ANG-SQ1)</name>
    <dbReference type="NCBI Taxonomy" id="398579"/>
    <lineage>
        <taxon>Bacteria</taxon>
        <taxon>Pseudomonadati</taxon>
        <taxon>Pseudomonadota</taxon>
        <taxon>Gammaproteobacteria</taxon>
        <taxon>Alteromonadales</taxon>
        <taxon>Shewanellaceae</taxon>
        <taxon>Shewanella</taxon>
    </lineage>
</organism>
<sequence length="197" mass="22573">MAASPKINRREHILQCLATMLETSPGQRITTAKLAAEVGVSEAALYRHFPSKARMFEGLIEFIEESLLSRINLIMDEEKDTMKRCQQLLQLLLVFAERNPGISRVLNGDALLGENERLRSRISQLFSKIETHLKQILREKSLREGKGFELDEAVLANLLLAVAEGRIAQFVRSEFKLKPTKHFNEQWNFIQQQLLQS</sequence>
<accession>A8H9B3</accession>
<dbReference type="EMBL" id="CP000851">
    <property type="protein sequence ID" value="ABV89150.1"/>
    <property type="molecule type" value="Genomic_DNA"/>
</dbReference>
<dbReference type="RefSeq" id="WP_012157032.1">
    <property type="nucleotide sequence ID" value="NC_009901.1"/>
</dbReference>
<dbReference type="SMR" id="A8H9B3"/>
<dbReference type="STRING" id="398579.Spea_3840"/>
<dbReference type="KEGG" id="spl:Spea_3840"/>
<dbReference type="eggNOG" id="COG1309">
    <property type="taxonomic scope" value="Bacteria"/>
</dbReference>
<dbReference type="HOGENOM" id="CLU_069356_5_0_6"/>
<dbReference type="OrthoDB" id="9179041at2"/>
<dbReference type="Proteomes" id="UP000002608">
    <property type="component" value="Chromosome"/>
</dbReference>
<dbReference type="GO" id="GO:0043590">
    <property type="term" value="C:bacterial nucleoid"/>
    <property type="evidence" value="ECO:0007669"/>
    <property type="project" value="UniProtKB-UniRule"/>
</dbReference>
<dbReference type="GO" id="GO:0005737">
    <property type="term" value="C:cytoplasm"/>
    <property type="evidence" value="ECO:0007669"/>
    <property type="project" value="UniProtKB-UniRule"/>
</dbReference>
<dbReference type="GO" id="GO:0043565">
    <property type="term" value="F:sequence-specific DNA binding"/>
    <property type="evidence" value="ECO:0007669"/>
    <property type="project" value="UniProtKB-UniRule"/>
</dbReference>
<dbReference type="GO" id="GO:0051301">
    <property type="term" value="P:cell division"/>
    <property type="evidence" value="ECO:0007669"/>
    <property type="project" value="UniProtKB-KW"/>
</dbReference>
<dbReference type="GO" id="GO:0010974">
    <property type="term" value="P:negative regulation of division septum assembly"/>
    <property type="evidence" value="ECO:0007669"/>
    <property type="project" value="InterPro"/>
</dbReference>
<dbReference type="Gene3D" id="1.10.357.10">
    <property type="entry name" value="Tetracycline Repressor, domain 2"/>
    <property type="match status" value="1"/>
</dbReference>
<dbReference type="HAMAP" id="MF_01839">
    <property type="entry name" value="NO_factor_SlmA"/>
    <property type="match status" value="1"/>
</dbReference>
<dbReference type="InterPro" id="IPR009057">
    <property type="entry name" value="Homeodomain-like_sf"/>
</dbReference>
<dbReference type="InterPro" id="IPR050624">
    <property type="entry name" value="HTH-type_Tx_Regulator"/>
</dbReference>
<dbReference type="InterPro" id="IPR001647">
    <property type="entry name" value="HTH_TetR"/>
</dbReference>
<dbReference type="InterPro" id="IPR023769">
    <property type="entry name" value="NO_SlmA"/>
</dbReference>
<dbReference type="InterPro" id="IPR054580">
    <property type="entry name" value="SlmA-like_C"/>
</dbReference>
<dbReference type="InterPro" id="IPR036271">
    <property type="entry name" value="Tet_transcr_reg_TetR-rel_C_sf"/>
</dbReference>
<dbReference type="NCBIfam" id="NF007015">
    <property type="entry name" value="PRK09480.1"/>
    <property type="match status" value="1"/>
</dbReference>
<dbReference type="PANTHER" id="PTHR43479">
    <property type="entry name" value="ACREF/ENVCD OPERON REPRESSOR-RELATED"/>
    <property type="match status" value="1"/>
</dbReference>
<dbReference type="PANTHER" id="PTHR43479:SF11">
    <property type="entry name" value="ACREF_ENVCD OPERON REPRESSOR-RELATED"/>
    <property type="match status" value="1"/>
</dbReference>
<dbReference type="Pfam" id="PF22276">
    <property type="entry name" value="SlmA-like_C"/>
    <property type="match status" value="1"/>
</dbReference>
<dbReference type="Pfam" id="PF00440">
    <property type="entry name" value="TetR_N"/>
    <property type="match status" value="1"/>
</dbReference>
<dbReference type="SUPFAM" id="SSF46689">
    <property type="entry name" value="Homeodomain-like"/>
    <property type="match status" value="1"/>
</dbReference>
<dbReference type="SUPFAM" id="SSF48498">
    <property type="entry name" value="Tetracyclin repressor-like, C-terminal domain"/>
    <property type="match status" value="1"/>
</dbReference>
<dbReference type="PROSITE" id="PS50977">
    <property type="entry name" value="HTH_TETR_2"/>
    <property type="match status" value="1"/>
</dbReference>
<comment type="function">
    <text evidence="1">Required for nucleoid occlusion (NO) phenomenon, which prevents Z-ring formation and cell division over the nucleoid. Acts as a DNA-associated cell division inhibitor that binds simultaneously chromosomal DNA and FtsZ, and disrupts the assembly of FtsZ polymers. SlmA-DNA-binding sequences (SBS) are dispersed on non-Ter regions of the chromosome, preventing FtsZ polymerization at these regions.</text>
</comment>
<comment type="subunit">
    <text evidence="1">Homodimer. Interacts with FtsZ.</text>
</comment>
<comment type="subcellular location">
    <subcellularLocation>
        <location evidence="1">Cytoplasm</location>
        <location evidence="1">Nucleoid</location>
    </subcellularLocation>
</comment>
<comment type="similarity">
    <text evidence="1">Belongs to the nucleoid occlusion factor SlmA family.</text>
</comment>
<protein>
    <recommendedName>
        <fullName evidence="1">Nucleoid occlusion factor SlmA</fullName>
    </recommendedName>
</protein>
<proteinExistence type="inferred from homology"/>
<name>SLMA_SHEPA</name>
<evidence type="ECO:0000255" key="1">
    <source>
        <dbReference type="HAMAP-Rule" id="MF_01839"/>
    </source>
</evidence>